<dbReference type="EMBL" id="AB017933">
    <property type="protein sequence ID" value="BAA75753.1"/>
    <property type="molecule type" value="mRNA"/>
</dbReference>
<dbReference type="EMBL" id="AB017934">
    <property type="protein sequence ID" value="BAA75754.1"/>
    <property type="molecule type" value="mRNA"/>
</dbReference>
<dbReference type="EMBL" id="AB017935">
    <property type="protein sequence ID" value="BAA75755.1"/>
    <property type="molecule type" value="mRNA"/>
</dbReference>
<dbReference type="EMBL" id="AB017936">
    <property type="protein sequence ID" value="BAA75756.1"/>
    <property type="molecule type" value="mRNA"/>
</dbReference>
<dbReference type="EMBL" id="AB017937">
    <property type="protein sequence ID" value="BAA75757.1"/>
    <property type="molecule type" value="mRNA"/>
</dbReference>
<dbReference type="EMBL" id="AB017938">
    <property type="protein sequence ID" value="BAA75758.1"/>
    <property type="molecule type" value="mRNA"/>
</dbReference>
<dbReference type="EMBL" id="AB017939">
    <property type="protein sequence ID" value="BAA75759.1"/>
    <property type="molecule type" value="mRNA"/>
</dbReference>
<dbReference type="EMBL" id="AB017941">
    <property type="protein sequence ID" value="BAA75761.1"/>
    <property type="molecule type" value="mRNA"/>
</dbReference>
<dbReference type="PIR" id="B25866">
    <property type="entry name" value="B25866"/>
</dbReference>
<dbReference type="SMR" id="P10457"/>
<dbReference type="GO" id="GO:0005576">
    <property type="term" value="C:extracellular region"/>
    <property type="evidence" value="ECO:0007669"/>
    <property type="project" value="UniProtKB-SubCell"/>
</dbReference>
<dbReference type="GO" id="GO:0030550">
    <property type="term" value="F:acetylcholine receptor inhibitor activity"/>
    <property type="evidence" value="ECO:0007669"/>
    <property type="project" value="UniProtKB-KW"/>
</dbReference>
<dbReference type="GO" id="GO:0099106">
    <property type="term" value="F:ion channel regulator activity"/>
    <property type="evidence" value="ECO:0007669"/>
    <property type="project" value="UniProtKB-KW"/>
</dbReference>
<dbReference type="GO" id="GO:0090729">
    <property type="term" value="F:toxin activity"/>
    <property type="evidence" value="ECO:0007669"/>
    <property type="project" value="UniProtKB-KW"/>
</dbReference>
<dbReference type="CDD" id="cd00206">
    <property type="entry name" value="TFP_snake_toxin"/>
    <property type="match status" value="1"/>
</dbReference>
<dbReference type="FunFam" id="2.10.60.10:FF:000024">
    <property type="entry name" value="Cytotoxin 1"/>
    <property type="match status" value="1"/>
</dbReference>
<dbReference type="Gene3D" id="2.10.60.10">
    <property type="entry name" value="CD59"/>
    <property type="match status" value="1"/>
</dbReference>
<dbReference type="InterPro" id="IPR003571">
    <property type="entry name" value="Snake_3FTx"/>
</dbReference>
<dbReference type="InterPro" id="IPR045860">
    <property type="entry name" value="Snake_toxin-like_sf"/>
</dbReference>
<dbReference type="InterPro" id="IPR018354">
    <property type="entry name" value="Snake_toxin_con_site"/>
</dbReference>
<dbReference type="InterPro" id="IPR054131">
    <property type="entry name" value="Toxin_cobra-type"/>
</dbReference>
<dbReference type="Pfam" id="PF21947">
    <property type="entry name" value="Toxin_cobra-type"/>
    <property type="match status" value="1"/>
</dbReference>
<dbReference type="SUPFAM" id="SSF57302">
    <property type="entry name" value="Snake toxin-like"/>
    <property type="match status" value="1"/>
</dbReference>
<dbReference type="PROSITE" id="PS00272">
    <property type="entry name" value="SNAKE_TOXIN"/>
    <property type="match status" value="1"/>
</dbReference>
<feature type="signal peptide" evidence="4">
    <location>
        <begin position="1"/>
        <end position="21"/>
    </location>
</feature>
<feature type="chain" id="PRO_0000035437" description="Short neurotoxin II" evidence="4">
    <location>
        <begin position="22"/>
        <end position="83"/>
    </location>
</feature>
<feature type="disulfide bond" evidence="1">
    <location>
        <begin position="24"/>
        <end position="45"/>
    </location>
</feature>
<feature type="disulfide bond" evidence="1">
    <location>
        <begin position="38"/>
        <end position="62"/>
    </location>
</feature>
<feature type="disulfide bond" evidence="1">
    <location>
        <begin position="64"/>
        <end position="75"/>
    </location>
</feature>
<feature type="disulfide bond" evidence="1">
    <location>
        <begin position="76"/>
        <end position="81"/>
    </location>
</feature>
<feature type="sequence variant">
    <original>V</original>
    <variation>M</variation>
    <location>
        <position position="13"/>
    </location>
</feature>
<comment type="function">
    <text evidence="2">Binds to muscle nicotinic acetylcholine receptor (nAChR) and inhibit acetylcholine from binding to the receptor, thereby impairing neuromuscular transmission.</text>
</comment>
<comment type="subcellular location">
    <subcellularLocation>
        <location evidence="3">Secreted</location>
    </subcellularLocation>
</comment>
<comment type="tissue specificity">
    <text evidence="5">Expressed by the venom gland.</text>
</comment>
<comment type="similarity">
    <text evidence="5">Belongs to the three-finger toxin family. Short-chain subfamily. Type I alpha-neurotoxin sub-subfamily.</text>
</comment>
<protein>
    <recommendedName>
        <fullName>Short neurotoxin II</fullName>
    </recommendedName>
</protein>
<sequence>MKTLLLTLVVVTVVCLDLGYTRRCYNQQSSQPKTTKSCPPGENSCYNKQWRDHRGSITERGCGCPTVKPGIKLRCCESEDCNN</sequence>
<evidence type="ECO:0000250" key="1">
    <source>
        <dbReference type="UniProtKB" id="P0C1Z0"/>
    </source>
</evidence>
<evidence type="ECO:0000250" key="2">
    <source>
        <dbReference type="UniProtKB" id="P60775"/>
    </source>
</evidence>
<evidence type="ECO:0000269" key="3">
    <source ref="1"/>
</evidence>
<evidence type="ECO:0000269" key="4">
    <source ref="2"/>
</evidence>
<evidence type="ECO:0000305" key="5"/>
<organism>
    <name type="scientific">Laticauda colubrina</name>
    <name type="common">Yellow-lipped sea krait</name>
    <name type="synonym">Banded sea krait</name>
    <dbReference type="NCBI Taxonomy" id="8628"/>
    <lineage>
        <taxon>Eukaryota</taxon>
        <taxon>Metazoa</taxon>
        <taxon>Chordata</taxon>
        <taxon>Craniata</taxon>
        <taxon>Vertebrata</taxon>
        <taxon>Euteleostomi</taxon>
        <taxon>Lepidosauria</taxon>
        <taxon>Squamata</taxon>
        <taxon>Bifurcata</taxon>
        <taxon>Unidentata</taxon>
        <taxon>Episquamata</taxon>
        <taxon>Toxicofera</taxon>
        <taxon>Serpentes</taxon>
        <taxon>Colubroidea</taxon>
        <taxon>Elapidae</taxon>
        <taxon>Laticaudinae</taxon>
        <taxon>Laticauda</taxon>
    </lineage>
</organism>
<proteinExistence type="evidence at protein level"/>
<name>3S12_LATCO</name>
<keyword id="KW-0008">Acetylcholine receptor inhibiting toxin</keyword>
<keyword id="KW-0903">Direct protein sequencing</keyword>
<keyword id="KW-1015">Disulfide bond</keyword>
<keyword id="KW-0872">Ion channel impairing toxin</keyword>
<keyword id="KW-0528">Neurotoxin</keyword>
<keyword id="KW-0629">Postsynaptic neurotoxin</keyword>
<keyword id="KW-0964">Secreted</keyword>
<keyword id="KW-0732">Signal</keyword>
<keyword id="KW-0800">Toxin</keyword>
<accession>P10457</accession>
<accession>Q9PRJ0</accession>
<accession>Q9PRJ7</accession>
<reference key="1">
    <citation type="submission" date="1998-09" db="EMBL/GenBank/DDBJ databases">
        <title>Classification of sea snakes in genus Laticauda by nucleotide sequences encoding short chain neurotoxins.</title>
        <authorList>
            <person name="Kariya Y."/>
            <person name="Araki S."/>
            <person name="Agu H."/>
            <person name="Tamiya T."/>
            <person name="Tsuchiya T."/>
        </authorList>
    </citation>
    <scope>NUCLEOTIDE SEQUENCE [MRNA]</scope>
    <source>
        <tissue>Venom gland</tissue>
    </source>
</reference>
<reference key="2">
    <citation type="journal article" date="1983" name="Toxicon 21 Suppl.">
        <title>Neurotoxins of sea snakes genus Laticauda.</title>
        <authorList>
            <person name="Tamiya N."/>
            <person name="Sato A."/>
            <person name="Kim H.S."/>
            <person name="Teruuchi T."/>
            <person name="Takasaki C."/>
            <person name="Ishikawa Y."/>
            <person name="Guinea M.L."/>
            <person name="McCoy M."/>
            <person name="Heatwole H."/>
            <person name="Cogger H.G."/>
        </authorList>
    </citation>
    <scope>PROTEIN SEQUENCE OF 22-83</scope>
    <scope>SUBCELLULAR LOCATION</scope>
    <source>
        <strain>Japanese</strain>
        <strain>Philippines</strain>
        <tissue>Venom</tissue>
    </source>
</reference>